<evidence type="ECO:0000255" key="1">
    <source>
        <dbReference type="HAMAP-Rule" id="MF_04069"/>
    </source>
</evidence>
<evidence type="ECO:0000256" key="2">
    <source>
        <dbReference type="SAM" id="MobiDB-lite"/>
    </source>
</evidence>
<comment type="function">
    <text evidence="1">Forms a proton-selective ion channel that is necessary for the efficient release of the viral genome during virus entry. After attaching to the cell surface, the virion enters the cell by endocytosis. Acidification of the endosome triggers M2 ion channel activity. The influx of protons into virion interior is believed to disrupt interactions between the viral ribonucleoprotein (RNP), matrix protein 1 (M1), and lipid bilayers, thereby freeing the viral genome from interaction with viral proteins and enabling RNA segments to migrate to the host cell nucleus, where influenza virus RNA transcription and replication occur. Also plays a role in viral proteins secretory pathway. Elevates the intravesicular pH of normally acidic compartments, such as trans-Golgi network, preventing newly formed hemagglutinin from premature switching to the fusion-active conformation.</text>
</comment>
<comment type="activity regulation">
    <text>The M2 protein from most influenza A strains is inhibited by amantadine and rimantadine, resulting in viral uncoating incapacity. Emergence of amantadine-resistant variants is usually rapid.</text>
</comment>
<comment type="subunit">
    <text evidence="1">Homotetramer; composed of two disulfide-linked dimers held together by non-covalent interactions. May interact with matrix protein 1.</text>
</comment>
<comment type="subcellular location">
    <subcellularLocation>
        <location evidence="1">Virion membrane</location>
    </subcellularLocation>
    <subcellularLocation>
        <location evidence="1">Host apical cell membrane</location>
        <topology evidence="1">Single-pass type III membrane protein</topology>
    </subcellularLocation>
    <text evidence="1">Abundantly expressed at the apical plasma membrane in infected polarized epithelial cells, in close proximity to budding and assembled virions. Minor component of virions (only 16-20 molecules/virion).</text>
</comment>
<comment type="alternative products">
    <event type="alternative splicing"/>
    <isoform>
        <id>A4GBX8-1</id>
        <name>M2</name>
        <sequence type="displayed"/>
    </isoform>
    <isoform>
        <id>A4GBX9-1</id>
        <name>M1</name>
        <sequence type="external"/>
    </isoform>
    <text>Only the first 9 residues are shared by the 2 isoforms.</text>
</comment>
<comment type="domain">
    <text evidence="1">Cytoplasmic tail plays an important role in virion assembly and morphogenesis.</text>
</comment>
<comment type="miscellaneous">
    <text evidence="1">When the channel is activated, one or more imidazole moieties of His-37 probably become bi-protonated.</text>
</comment>
<comment type="similarity">
    <text evidence="1">Belongs to the influenza viruses matrix protein M2 family.</text>
</comment>
<keyword id="KW-0025">Alternative splicing</keyword>
<keyword id="KW-1015">Disulfide bond</keyword>
<keyword id="KW-0325">Glycoprotein</keyword>
<keyword id="KW-1032">Host cell membrane</keyword>
<keyword id="KW-1043">Host membrane</keyword>
<keyword id="KW-0945">Host-virus interaction</keyword>
<keyword id="KW-0375">Hydrogen ion transport</keyword>
<keyword id="KW-1083">Inhibition of host autophagy by virus</keyword>
<keyword id="KW-0407">Ion channel</keyword>
<keyword id="KW-0406">Ion transport</keyword>
<keyword id="KW-0449">Lipoprotein</keyword>
<keyword id="KW-0472">Membrane</keyword>
<keyword id="KW-0564">Palmitate</keyword>
<keyword id="KW-0597">Phosphoprotein</keyword>
<keyword id="KW-0735">Signal-anchor</keyword>
<keyword id="KW-0812">Transmembrane</keyword>
<keyword id="KW-1133">Transmembrane helix</keyword>
<keyword id="KW-0813">Transport</keyword>
<keyword id="KW-1182">Viral ion channel</keyword>
<keyword id="KW-0946">Virion</keyword>
<protein>
    <recommendedName>
        <fullName evidence="1">Matrix protein 2</fullName>
    </recommendedName>
    <alternativeName>
        <fullName evidence="1">Proton channel protein M2</fullName>
    </alternativeName>
</protein>
<accession>A4GBX8</accession>
<name>M2_I77AA</name>
<dbReference type="EMBL" id="CY020294">
    <property type="protein sequence ID" value="ABO38067.1"/>
    <property type="molecule type" value="Viral_cRNA"/>
</dbReference>
<dbReference type="BMRB" id="A4GBX8"/>
<dbReference type="SMR" id="A4GBX8"/>
<dbReference type="GlyCosmos" id="A4GBX8">
    <property type="glycosylation" value="1 site, No reported glycans"/>
</dbReference>
<dbReference type="Proteomes" id="UP000008025">
    <property type="component" value="Genome"/>
</dbReference>
<dbReference type="GO" id="GO:0020002">
    <property type="term" value="C:host cell plasma membrane"/>
    <property type="evidence" value="ECO:0007669"/>
    <property type="project" value="UniProtKB-SubCell"/>
</dbReference>
<dbReference type="GO" id="GO:0016020">
    <property type="term" value="C:membrane"/>
    <property type="evidence" value="ECO:0007669"/>
    <property type="project" value="UniProtKB-UniRule"/>
</dbReference>
<dbReference type="GO" id="GO:0055036">
    <property type="term" value="C:virion membrane"/>
    <property type="evidence" value="ECO:0007669"/>
    <property type="project" value="UniProtKB-SubCell"/>
</dbReference>
<dbReference type="GO" id="GO:0005216">
    <property type="term" value="F:monoatomic ion channel activity"/>
    <property type="evidence" value="ECO:0007669"/>
    <property type="project" value="UniProtKB-UniRule"/>
</dbReference>
<dbReference type="GO" id="GO:0015078">
    <property type="term" value="F:proton transmembrane transporter activity"/>
    <property type="evidence" value="ECO:0007669"/>
    <property type="project" value="UniProtKB-UniRule"/>
</dbReference>
<dbReference type="GO" id="GO:0051259">
    <property type="term" value="P:protein complex oligomerization"/>
    <property type="evidence" value="ECO:0007669"/>
    <property type="project" value="UniProtKB-UniRule"/>
</dbReference>
<dbReference type="GO" id="GO:0044694">
    <property type="term" value="P:symbiont genome entry into host cell via pore formation in plasma membrane"/>
    <property type="evidence" value="ECO:0007669"/>
    <property type="project" value="UniProtKB-UniRule"/>
</dbReference>
<dbReference type="GO" id="GO:0140321">
    <property type="term" value="P:symbiont-mediated suppression of host autophagy"/>
    <property type="evidence" value="ECO:0007669"/>
    <property type="project" value="UniProtKB-KW"/>
</dbReference>
<dbReference type="Gene3D" id="6.10.250.1640">
    <property type="match status" value="1"/>
</dbReference>
<dbReference type="HAMAP" id="MF_04069">
    <property type="entry name" value="INFV_M2"/>
    <property type="match status" value="1"/>
</dbReference>
<dbReference type="InterPro" id="IPR002089">
    <property type="entry name" value="Flu_M2"/>
</dbReference>
<dbReference type="Pfam" id="PF00599">
    <property type="entry name" value="Flu_M2"/>
    <property type="match status" value="1"/>
</dbReference>
<organism>
    <name type="scientific">Influenza A virus (strain A/Brazil/11/1978 H1N1)</name>
    <dbReference type="NCBI Taxonomy" id="393560"/>
    <lineage>
        <taxon>Viruses</taxon>
        <taxon>Riboviria</taxon>
        <taxon>Orthornavirae</taxon>
        <taxon>Negarnaviricota</taxon>
        <taxon>Polyploviricotina</taxon>
        <taxon>Insthoviricetes</taxon>
        <taxon>Articulavirales</taxon>
        <taxon>Orthomyxoviridae</taxon>
        <taxon>Alphainfluenzavirus</taxon>
        <taxon>Alphainfluenzavirus influenzae</taxon>
        <taxon>Influenza A virus</taxon>
    </lineage>
</organism>
<gene>
    <name evidence="1" type="primary">M</name>
    <name type="synonym">M2</name>
</gene>
<reference key="1">
    <citation type="submission" date="2007-03" db="EMBL/GenBank/DDBJ databases">
        <title>The NIAID influenza genome sequencing project.</title>
        <authorList>
            <person name="Ghedin E."/>
            <person name="Spiro D."/>
            <person name="Miller N."/>
            <person name="Zaborsky J."/>
            <person name="Feldblyum T."/>
            <person name="Subbu V."/>
            <person name="Shumway M."/>
            <person name="Sparenborg J."/>
            <person name="Groveman L."/>
            <person name="Halpin R."/>
            <person name="Sitz J."/>
            <person name="Koo H."/>
            <person name="Salzberg S.L."/>
            <person name="Webster R.G."/>
            <person name="Hoffmann E."/>
            <person name="Krauss S."/>
            <person name="Naeve C."/>
            <person name="Bao Y."/>
            <person name="Bolotov P."/>
            <person name="Dernovoy D."/>
            <person name="Kiryutin B."/>
            <person name="Lipman D.J."/>
            <person name="Tatusova T."/>
        </authorList>
    </citation>
    <scope>NUCLEOTIDE SEQUENCE [GENOMIC RNA]</scope>
</reference>
<reference key="2">
    <citation type="submission" date="2007-03" db="EMBL/GenBank/DDBJ databases">
        <authorList>
            <consortium name="The NIAID Influenza Genome Sequencing Consortium"/>
        </authorList>
    </citation>
    <scope>NUCLEOTIDE SEQUENCE [GENOMIC RNA]</scope>
</reference>
<proteinExistence type="inferred from homology"/>
<sequence>MSLLTEVETPIRNEWGCRCNDSSDPLVVAASIIGILHLILWILDRLFFKCIYRLFKHGLKRGPSTEGVPESMREEYRKEQQNAVDADDSHFVNIELE</sequence>
<organismHost>
    <name type="scientific">Aves</name>
    <dbReference type="NCBI Taxonomy" id="8782"/>
</organismHost>
<organismHost>
    <name type="scientific">Homo sapiens</name>
    <name type="common">Human</name>
    <dbReference type="NCBI Taxonomy" id="9606"/>
</organismHost>
<organismHost>
    <name type="scientific">Sus scrofa</name>
    <name type="common">Pig</name>
    <dbReference type="NCBI Taxonomy" id="9823"/>
</organismHost>
<feature type="chain" id="PRO_0000372926" description="Matrix protein 2">
    <location>
        <begin position="1"/>
        <end position="97"/>
    </location>
</feature>
<feature type="topological domain" description="Virion surface" evidence="1">
    <location>
        <begin position="1"/>
        <end position="22"/>
    </location>
</feature>
<feature type="transmembrane region" description="Helical; Signal-anchor for type III membrane protein" evidence="1">
    <location>
        <begin position="23"/>
        <end position="43"/>
    </location>
</feature>
<feature type="topological domain" description="Intravirion" evidence="1">
    <location>
        <begin position="44"/>
        <end position="97"/>
    </location>
</feature>
<feature type="region of interest" description="Disordered" evidence="2">
    <location>
        <begin position="59"/>
        <end position="84"/>
    </location>
</feature>
<feature type="compositionally biased region" description="Basic and acidic residues" evidence="2">
    <location>
        <begin position="71"/>
        <end position="80"/>
    </location>
</feature>
<feature type="site" description="Essential for channel activity, possibly by being protonated during channel activation, and by forming the channel gate and the selective filter" evidence="1">
    <location>
        <position position="37"/>
    </location>
</feature>
<feature type="site" description="Seems to be involved in pH gating" evidence="1">
    <location>
        <position position="41"/>
    </location>
</feature>
<feature type="modified residue" description="Phosphoserine; by host" evidence="1">
    <location>
        <position position="64"/>
    </location>
</feature>
<feature type="lipid moiety-binding region" description="S-palmitoyl cysteine; by host" evidence="1">
    <location>
        <position position="50"/>
    </location>
</feature>
<feature type="glycosylation site" description="N-linked (GlcNAc...) asparagine; by host" evidence="1">
    <location>
        <position position="20"/>
    </location>
</feature>
<feature type="disulfide bond" description="Interchain (with C-17)" evidence="1">
    <location>
        <position position="17"/>
    </location>
</feature>
<feature type="disulfide bond" description="Interchain (with C-19)" evidence="1">
    <location>
        <position position="19"/>
    </location>
</feature>